<feature type="signal peptide" evidence="4">
    <location>
        <begin position="1"/>
        <end position="16"/>
    </location>
</feature>
<feature type="chain" id="PRO_0000454770" description="Low affinity immunoglobulin gamma Fc region receptor III-A" evidence="4">
    <location>
        <begin position="17"/>
        <end position="249"/>
    </location>
</feature>
<feature type="topological domain" description="Extracellular" evidence="7">
    <location>
        <begin position="17"/>
        <end position="198"/>
    </location>
</feature>
<feature type="transmembrane region" description="Helical" evidence="4">
    <location>
        <begin position="199"/>
        <end position="219"/>
    </location>
</feature>
<feature type="topological domain" description="Cytoplasmic" evidence="7">
    <location>
        <begin position="220"/>
        <end position="249"/>
    </location>
</feature>
<feature type="domain" description="Ig-like C2-type 1" evidence="5">
    <location>
        <begin position="24"/>
        <end position="104"/>
    </location>
</feature>
<feature type="domain" description="Ig-like C2-type 2" evidence="5">
    <location>
        <begin position="119"/>
        <end position="172"/>
    </location>
</feature>
<feature type="site" description="Important for receptor turnover" evidence="2">
    <location>
        <position position="220"/>
    </location>
</feature>
<feature type="glycosylation site" description="N-linked (GlcNAc...) asparagine" evidence="6">
    <location>
        <position position="55"/>
    </location>
</feature>
<feature type="glycosylation site" description="N-linked (GlcNAc...) asparagine" evidence="6">
    <location>
        <position position="63"/>
    </location>
</feature>
<feature type="glycosylation site" description="N-linked (GlcNAc...) asparagine" evidence="6">
    <location>
        <position position="166"/>
    </location>
</feature>
<feature type="glycosylation site" description="N-linked (GlcNAc...) asparagine" evidence="6">
    <location>
        <position position="179"/>
    </location>
</feature>
<feature type="disulfide bond" evidence="5">
    <location>
        <begin position="47"/>
        <end position="88"/>
    </location>
</feature>
<feature type="disulfide bond" evidence="5">
    <location>
        <begin position="127"/>
        <end position="171"/>
    </location>
</feature>
<feature type="sequence conflict" description="In Ref. 1; AER98511." evidence="7" ref="1">
    <location>
        <begin position="248"/>
        <end position="249"/>
    </location>
</feature>
<evidence type="ECO:0000250" key="1">
    <source>
        <dbReference type="UniProtKB" id="A0A0B4J1G0"/>
    </source>
</evidence>
<evidence type="ECO:0000250" key="2">
    <source>
        <dbReference type="UniProtKB" id="P08637"/>
    </source>
</evidence>
<evidence type="ECO:0000250" key="3">
    <source>
        <dbReference type="UniProtKB" id="Q28942"/>
    </source>
</evidence>
<evidence type="ECO:0000255" key="4"/>
<evidence type="ECO:0000255" key="5">
    <source>
        <dbReference type="PROSITE-ProRule" id="PRU00114"/>
    </source>
</evidence>
<evidence type="ECO:0000255" key="6">
    <source>
        <dbReference type="PROSITE-ProRule" id="PRU00498"/>
    </source>
</evidence>
<evidence type="ECO:0000305" key="7"/>
<protein>
    <recommendedName>
        <fullName evidence="3">Low affinity immunoglobulin gamma Fc region receptor III-A</fullName>
        <shortName>IgG Fc receptor III-A</shortName>
    </recommendedName>
    <alternativeName>
        <fullName>Fc-gamma RIII-alpha</fullName>
        <shortName evidence="3">FcgammaRIIIA</shortName>
    </alternativeName>
    <cdAntigenName evidence="2">CD16a</cdAntigenName>
</protein>
<sequence length="249" mass="27962">MWQLLPSTALLLVASARPQAADLPKAVVVSDPPGNRVLTLDSVTFTCQGANPSGNHSTRWLHNGTLISSQTSYFIRAASVENSGEYRCQTGLSELSDPVQLEVHVGWLLLQTPQRVFQEGEPIRLRCHSWKNKPVWNVQYFQNRRGKKFSYGNSEFYIPAARSEHNGSYFCRGLIGKRNESSEAVDIIIQGPPVPSTSALLPFWPHIPFAVVMALLFAVDTGLYFAMQRHLHNSKRAWENSKVSWKQDP</sequence>
<keyword id="KW-1003">Cell membrane</keyword>
<keyword id="KW-1015">Disulfide bond</keyword>
<keyword id="KW-0325">Glycoprotein</keyword>
<keyword id="KW-0390">IgG-binding protein</keyword>
<keyword id="KW-0391">Immunity</keyword>
<keyword id="KW-0393">Immunoglobulin domain</keyword>
<keyword id="KW-0472">Membrane</keyword>
<keyword id="KW-0675">Receptor</keyword>
<keyword id="KW-1185">Reference proteome</keyword>
<keyword id="KW-0677">Repeat</keyword>
<keyword id="KW-0732">Signal</keyword>
<keyword id="KW-0812">Transmembrane</keyword>
<keyword id="KW-1133">Transmembrane helix</keyword>
<proteinExistence type="evidence at transcript level"/>
<name>FCG3A_MUSPF</name>
<comment type="function">
    <text evidence="1 2 3">Receptor for the invariable Fc fragment of immunoglobulin gamma (IgG). Optimally activated upon binding of clustered antigen-IgG complexes displayed on cell surfaces, triggers lysis of antibody-coated cells, a process known as antibody-dependent cellular cytotoxicity (ADCC). Does not bind free monomeric IgG, thus avoiding inappropriate effector cell activation in the absence of antigenic trigger (By similarity). Mediates IgG effector functions on natural killer (NK) cells. Binds antigen-IgG complexes generated upon infection and triggers NK cell-dependent cytokine production and degranulation to limit viral load and propagation (By similarity). Fc-binding subunit that associates with FCER1G adapter to form functional signaling complexes. Following the engagement of antigen-IgG complexes, triggers phosphorylation of immunoreceptor tyrosine-based activation motif (ITAM)-containing adapter with subsequent activation of phosphatidylinositol 3-kinase signaling and sustained elevation of intracellular calcium that ultimately drive NK cell activation (By similarity). Mediates enhanced ADCC in response to afucosylated IgGs (PubMed:34485821).</text>
</comment>
<comment type="subunit">
    <text evidence="2">Forms a heterooligomeric complex with ITAM-containing signaling subunits FCER1G. Interacts (via transmembrane domain) with signaling subunits; this interaction is a prerequisite for receptor complex expression on the cell surface and intracellular signal transduction. Binds the Fc region of antigen-complexed IgG.</text>
</comment>
<comment type="subcellular location">
    <subcellularLocation>
        <location evidence="2">Cell membrane</location>
        <topology evidence="4">Single-pass membrane protein</topology>
    </subcellularLocation>
</comment>
<accession>M3XWH1</accession>
<accession>M1EQN2</accession>
<dbReference type="EMBL" id="JP009914">
    <property type="protein sequence ID" value="AER98511.1"/>
    <property type="molecule type" value="mRNA"/>
</dbReference>
<dbReference type="EMBL" id="AEYP01028609">
    <property type="status" value="NOT_ANNOTATED_CDS"/>
    <property type="molecule type" value="Genomic_DNA"/>
</dbReference>
<dbReference type="RefSeq" id="XP_004751441.2">
    <property type="nucleotide sequence ID" value="XM_004751384.2"/>
</dbReference>
<dbReference type="SMR" id="M3XWH1"/>
<dbReference type="FunCoup" id="M3XWH1">
    <property type="interactions" value="1"/>
</dbReference>
<dbReference type="STRING" id="9669.ENSMPUP00000003421"/>
<dbReference type="GlyCosmos" id="M3XWH1">
    <property type="glycosylation" value="4 sites, No reported glycans"/>
</dbReference>
<dbReference type="KEGG" id="mpuf:101680253"/>
<dbReference type="eggNOG" id="ENOG502RU1M">
    <property type="taxonomic scope" value="Eukaryota"/>
</dbReference>
<dbReference type="HOGENOM" id="CLU_023383_1_0_1"/>
<dbReference type="InParanoid" id="M3XWH1"/>
<dbReference type="OMA" id="GDNSTQW"/>
<dbReference type="OrthoDB" id="8917564at2759"/>
<dbReference type="Proteomes" id="UP000000715">
    <property type="component" value="Unplaced"/>
</dbReference>
<dbReference type="GO" id="GO:0009897">
    <property type="term" value="C:external side of plasma membrane"/>
    <property type="evidence" value="ECO:0007669"/>
    <property type="project" value="TreeGrafter"/>
</dbReference>
<dbReference type="GO" id="GO:0019864">
    <property type="term" value="F:IgG binding"/>
    <property type="evidence" value="ECO:0007669"/>
    <property type="project" value="UniProtKB-KW"/>
</dbReference>
<dbReference type="GO" id="GO:0019770">
    <property type="term" value="F:IgG receptor activity"/>
    <property type="evidence" value="ECO:0007669"/>
    <property type="project" value="TreeGrafter"/>
</dbReference>
<dbReference type="GO" id="GO:0001788">
    <property type="term" value="P:antibody-dependent cellular cytotoxicity"/>
    <property type="evidence" value="ECO:0007669"/>
    <property type="project" value="TreeGrafter"/>
</dbReference>
<dbReference type="CDD" id="cd05752">
    <property type="entry name" value="Ig1_FcgammaR_like"/>
    <property type="match status" value="1"/>
</dbReference>
<dbReference type="CDD" id="cd05753">
    <property type="entry name" value="Ig2_FcgammaR_like"/>
    <property type="match status" value="1"/>
</dbReference>
<dbReference type="FunFam" id="2.60.40.10:FF:000217">
    <property type="entry name" value="High affinity immunoglobulin gamma Fc receptor I"/>
    <property type="match status" value="1"/>
</dbReference>
<dbReference type="FunFam" id="2.60.40.10:FF:000356">
    <property type="entry name" value="Low affinity immunoglobulin gamma Fc region receptor III-A"/>
    <property type="match status" value="1"/>
</dbReference>
<dbReference type="Gene3D" id="2.60.40.10">
    <property type="entry name" value="Immunoglobulins"/>
    <property type="match status" value="2"/>
</dbReference>
<dbReference type="InterPro" id="IPR007110">
    <property type="entry name" value="Ig-like_dom"/>
</dbReference>
<dbReference type="InterPro" id="IPR036179">
    <property type="entry name" value="Ig-like_dom_sf"/>
</dbReference>
<dbReference type="InterPro" id="IPR013783">
    <property type="entry name" value="Ig-like_fold"/>
</dbReference>
<dbReference type="InterPro" id="IPR050488">
    <property type="entry name" value="Ig_Fc_receptor"/>
</dbReference>
<dbReference type="InterPro" id="IPR003599">
    <property type="entry name" value="Ig_sub"/>
</dbReference>
<dbReference type="InterPro" id="IPR003598">
    <property type="entry name" value="Ig_sub2"/>
</dbReference>
<dbReference type="PANTHER" id="PTHR11481">
    <property type="entry name" value="IMMUNOGLOBULIN FC RECEPTOR"/>
    <property type="match status" value="1"/>
</dbReference>
<dbReference type="PANTHER" id="PTHR11481:SF103">
    <property type="entry name" value="LOW AFFINITY IMMUNOGLOBULIN GAMMA FC REGION RECEPTOR III-A-RELATED"/>
    <property type="match status" value="1"/>
</dbReference>
<dbReference type="Pfam" id="PF13895">
    <property type="entry name" value="Ig_2"/>
    <property type="match status" value="2"/>
</dbReference>
<dbReference type="SMART" id="SM00409">
    <property type="entry name" value="IG"/>
    <property type="match status" value="2"/>
</dbReference>
<dbReference type="SMART" id="SM00408">
    <property type="entry name" value="IGc2"/>
    <property type="match status" value="2"/>
</dbReference>
<dbReference type="SUPFAM" id="SSF48726">
    <property type="entry name" value="Immunoglobulin"/>
    <property type="match status" value="2"/>
</dbReference>
<dbReference type="PROSITE" id="PS50835">
    <property type="entry name" value="IG_LIKE"/>
    <property type="match status" value="2"/>
</dbReference>
<organism>
    <name type="scientific">Mustela putorius furo</name>
    <name type="common">European domestic ferret</name>
    <name type="synonym">Mustela furo</name>
    <dbReference type="NCBI Taxonomy" id="9669"/>
    <lineage>
        <taxon>Eukaryota</taxon>
        <taxon>Metazoa</taxon>
        <taxon>Chordata</taxon>
        <taxon>Craniata</taxon>
        <taxon>Vertebrata</taxon>
        <taxon>Euteleostomi</taxon>
        <taxon>Mammalia</taxon>
        <taxon>Eutheria</taxon>
        <taxon>Laurasiatheria</taxon>
        <taxon>Carnivora</taxon>
        <taxon>Caniformia</taxon>
        <taxon>Musteloidea</taxon>
        <taxon>Mustelidae</taxon>
        <taxon>Mustelinae</taxon>
        <taxon>Mustela</taxon>
    </lineage>
</organism>
<gene>
    <name evidence="2" type="primary">FCGR3A</name>
</gene>
<reference key="1">
    <citation type="journal article" date="2013" name="J. Virol.">
        <title>Sequencing, annotation, and characterization of the influenza ferret infectome.</title>
        <authorList>
            <person name="Leon A.J."/>
            <person name="Banner D."/>
            <person name="Xu L."/>
            <person name="Ran L."/>
            <person name="Peng Z."/>
            <person name="Yi K."/>
            <person name="Chen C."/>
            <person name="Xu F."/>
            <person name="Huang J."/>
            <person name="Zhao Z."/>
            <person name="Lin Z."/>
            <person name="Huang S.H."/>
            <person name="Fang Y."/>
            <person name="Kelvin A.A."/>
            <person name="Ross T.M."/>
            <person name="Farooqui A."/>
            <person name="Kelvin D.J."/>
        </authorList>
    </citation>
    <scope>NUCLEOTIDE SEQUENCE [LARGE SCALE MRNA]</scope>
    <source>
        <tissue>Lung</tissue>
    </source>
</reference>
<reference key="2">
    <citation type="submission" date="2011-04" db="EMBL/GenBank/DDBJ databases">
        <authorList>
            <person name="Di Palma F."/>
            <person name="Alfoldi J."/>
            <person name="Johnson J."/>
            <person name="Jaffe D."/>
            <person name="Berlin A."/>
            <person name="Gnerre S."/>
            <person name="Grabherr M."/>
            <person name="Hall G."/>
            <person name="Lara M."/>
            <person name="MacCallum I."/>
            <person name="Mauceli E."/>
            <person name="Przyblyski D."/>
            <person name="Ribeiro F."/>
            <person name="Russell P."/>
            <person name="Sharpe T."/>
            <person name="Turner-Maier J."/>
            <person name="Walker B.J."/>
            <person name="Young S."/>
            <person name="Birren B."/>
            <person name="Lindblad-Toh K."/>
        </authorList>
    </citation>
    <scope>NUCLEOTIDE SEQUENCE [LARGE SCALE GENOMIC DNA]</scope>
</reference>
<reference key="3">
    <citation type="journal article" date="1994" name="Bull. World Health Organ.">
        <title>Nomenclature of Fc receptors. IUIS/WHO Subcommittee on Nomenclature of Fc receptors.</title>
        <authorList>
            <person name="Conrad D."/>
            <person name="Cooper M."/>
            <person name="Fridman W.H."/>
            <person name="Kinet J.P."/>
            <person name="Ravetch J."/>
        </authorList>
    </citation>
    <scope>NOMENCLATURE</scope>
</reference>
<reference key="4">
    <citation type="journal article" date="2021" name="Antib Ther">
        <title>Cross-species higher sensitivities of FcgammaRIIIA/FcgammaRIV to afucosylated IgG for enhanced ADCC.</title>
        <authorList>
            <person name="Mao C."/>
            <person name="Near R."/>
            <person name="Zhong X."/>
            <person name="Gao W."/>
        </authorList>
    </citation>
    <scope>FUNCTION</scope>
</reference>